<name>CFM3_MAIZE</name>
<reference key="1">
    <citation type="journal article" date="2008" name="RNA">
        <title>Two CRM protein subfamilies cooperate in the splicing of group IIB introns in chloroplasts.</title>
        <authorList>
            <person name="Asakura Y."/>
            <person name="Bayraktar O.A."/>
            <person name="Barkan A."/>
        </authorList>
    </citation>
    <scope>NUCLEOTIDE SEQUENCE [MRNA]</scope>
    <scope>FUNCTION</scope>
    <scope>SUBUNIT</scope>
    <scope>SUBCELLULAR LOCATION</scope>
</reference>
<comment type="function">
    <text evidence="1 5">Binds specific group II introns in chloroplasts and facilitates their splicing. Acts on subgroup IIB introns. The substrates of the subgroup IIB also require the CRM domain proteins CAF1 or CAF2, with a simultaneous binding of CFM3 and CAF1 or CAF2 (PubMed:18799595). May influence the biogenesis of the mitochondrial small ribosomal subunit (By similarity).</text>
</comment>
<comment type="subunit">
    <text evidence="5">Interacts with RNA. Part of large ribonucleo-protein particles that contain CAF1 and/or CAF2, and RNC1.</text>
</comment>
<comment type="subcellular location">
    <subcellularLocation>
        <location evidence="5">Plastid</location>
        <location evidence="5">Chloroplast stroma</location>
    </subcellularLocation>
    <subcellularLocation>
        <location evidence="5">Mitochondrion</location>
    </subcellularLocation>
</comment>
<organism>
    <name type="scientific">Zea mays</name>
    <name type="common">Maize</name>
    <dbReference type="NCBI Taxonomy" id="4577"/>
    <lineage>
        <taxon>Eukaryota</taxon>
        <taxon>Viridiplantae</taxon>
        <taxon>Streptophyta</taxon>
        <taxon>Embryophyta</taxon>
        <taxon>Tracheophyta</taxon>
        <taxon>Spermatophyta</taxon>
        <taxon>Magnoliopsida</taxon>
        <taxon>Liliopsida</taxon>
        <taxon>Poales</taxon>
        <taxon>Poaceae</taxon>
        <taxon>PACMAD clade</taxon>
        <taxon>Panicoideae</taxon>
        <taxon>Andropogonodae</taxon>
        <taxon>Andropogoneae</taxon>
        <taxon>Tripsacinae</taxon>
        <taxon>Zea</taxon>
    </lineage>
</organism>
<sequence length="842" mass="94060">MAMASSPACHFRHPPRLRLLLPLSTSAPHPWLYSWSHPRQRGRLRAPPAALDLRPEPSPSSDSDDEDAVGASRSSGRSTMSLILSRLRRAGYSGEDPRAAAPPHPPRGSVEDVFRADDGVLPNARGGFDADDEERALGDARFPWERPMPPPEAAPRSARSPTWMAELTLPAAELRRLRHAAIRIKSRTKVGGAGVTREIVEKIKEKWKTEEVVRVKVSGTPALNMRLFHEILERKTGGLVIWRSGTSVSLYRGVDYDEPEPTKKSKKNSQSLAMDFPIKGSSNPSLLPTETANSVRDSNVALVSNAAKEELVVQAPEIKYEDEIDKLLDELGPRYTDWPGSDPLPVDADLLPANMPGYKPPFRVLPYGVRPSLSRRDTTNLRRLARGLPPHFALGRSRQLQGLANAMVKLWEKSSIAKIALKRGVQLTTSERMAEDIKKLTGGVMLSRNNEFIVFYRGKDFLSSELAEVLLERERLAKSLQDEEEARRKAASYFSSAETYAQPTVAGTLGETLEANSKYGTKHDENHADKMARTIEAARHADLVRKLEWKLSLAQKKMEKAERVLGKVETALRPTEDSRPPETITDEERFMFRKLGLRMKAFLLLGRRGVFDGTIENMHLHWKYRELVKILVKAKSFADVKRIALSLEAESGGILVSVDKVSKGYAIVVFRGKNYRRPSSLRPRNLLSKRKALARSIELQRHQALSRHFAKLNRKVERLKAELVQMEDVKEQGDEELYAKLDAAYSSDDEDMEDEDDEAYLKRFDNEVAGATADDDGSDDYTSAADEADYPDSDDEAGDCSEDEGEDDEDEAAAGVSDAGFHGEVVGFSSDTDRRNHDVNEY</sequence>
<feature type="transit peptide" description="Chloroplast and mitochondrion" evidence="2">
    <location>
        <begin position="1"/>
        <end position="82"/>
    </location>
</feature>
<feature type="chain" id="PRO_0000435534" description="CRM-domain containing factor CFM3, chloroplastic/mitochondrial">
    <location>
        <begin position="83"/>
        <end position="842"/>
    </location>
</feature>
<feature type="domain" description="CRM 1" evidence="3">
    <location>
        <begin position="167"/>
        <end position="263"/>
    </location>
</feature>
<feature type="domain" description="CRM 2" evidence="3">
    <location>
        <begin position="371"/>
        <end position="468"/>
    </location>
</feature>
<feature type="domain" description="CRM 3" evidence="3">
    <location>
        <begin position="582"/>
        <end position="682"/>
    </location>
</feature>
<feature type="region of interest" description="Disordered" evidence="4">
    <location>
        <begin position="49"/>
        <end position="80"/>
    </location>
</feature>
<feature type="region of interest" description="Disordered" evidence="4">
    <location>
        <begin position="141"/>
        <end position="160"/>
    </location>
</feature>
<feature type="region of interest" description="Disordered" evidence="4">
    <location>
        <begin position="254"/>
        <end position="290"/>
    </location>
</feature>
<feature type="region of interest" description="Disordered" evidence="4">
    <location>
        <begin position="768"/>
        <end position="842"/>
    </location>
</feature>
<feature type="coiled-coil region" evidence="2">
    <location>
        <begin position="703"/>
        <end position="732"/>
    </location>
</feature>
<feature type="compositionally biased region" description="Polar residues" evidence="4">
    <location>
        <begin position="280"/>
        <end position="290"/>
    </location>
</feature>
<feature type="compositionally biased region" description="Acidic residues" evidence="4">
    <location>
        <begin position="786"/>
        <end position="812"/>
    </location>
</feature>
<feature type="compositionally biased region" description="Basic and acidic residues" evidence="4">
    <location>
        <begin position="831"/>
        <end position="842"/>
    </location>
</feature>
<protein>
    <recommendedName>
        <fullName evidence="7">CRM-domain containing factor CFM3, chloroplastic/mitochondrial</fullName>
    </recommendedName>
    <alternativeName>
        <fullName evidence="6">Protein CRM FAMILY MEMBER 3</fullName>
        <shortName evidence="6">ZmCFM3</shortName>
    </alternativeName>
</protein>
<keyword id="KW-0150">Chloroplast</keyword>
<keyword id="KW-0175">Coiled coil</keyword>
<keyword id="KW-0496">Mitochondrion</keyword>
<keyword id="KW-0507">mRNA processing</keyword>
<keyword id="KW-0508">mRNA splicing</keyword>
<keyword id="KW-0934">Plastid</keyword>
<keyword id="KW-1185">Reference proteome</keyword>
<keyword id="KW-0677">Repeat</keyword>
<keyword id="KW-0687">Ribonucleoprotein</keyword>
<keyword id="KW-0694">RNA-binding</keyword>
<keyword id="KW-0809">Transit peptide</keyword>
<evidence type="ECO:0000250" key="1">
    <source>
        <dbReference type="UniProtKB" id="F4J2U9"/>
    </source>
</evidence>
<evidence type="ECO:0000255" key="2"/>
<evidence type="ECO:0000255" key="3">
    <source>
        <dbReference type="PROSITE-ProRule" id="PRU00626"/>
    </source>
</evidence>
<evidence type="ECO:0000256" key="4">
    <source>
        <dbReference type="SAM" id="MobiDB-lite"/>
    </source>
</evidence>
<evidence type="ECO:0000269" key="5">
    <source>
    </source>
</evidence>
<evidence type="ECO:0000303" key="6">
    <source>
    </source>
</evidence>
<evidence type="ECO:0000305" key="7"/>
<dbReference type="EMBL" id="EU084957">
    <property type="protein sequence ID" value="ABU96081.1"/>
    <property type="molecule type" value="mRNA"/>
</dbReference>
<dbReference type="RefSeq" id="NP_001106061.1">
    <property type="nucleotide sequence ID" value="NM_001112591.1"/>
</dbReference>
<dbReference type="SMR" id="A7XN92"/>
<dbReference type="DIP" id="DIP-48745N"/>
<dbReference type="FunCoup" id="A7XN92">
    <property type="interactions" value="2381"/>
</dbReference>
<dbReference type="IntAct" id="A7XN92">
    <property type="interactions" value="4"/>
</dbReference>
<dbReference type="STRING" id="4577.A7XN92"/>
<dbReference type="PaxDb" id="4577-GRMZM2G436001_P02"/>
<dbReference type="EnsemblPlants" id="Zm00001eb114780_T001">
    <property type="protein sequence ID" value="Zm00001eb114780_P001"/>
    <property type="gene ID" value="Zm00001eb114780"/>
</dbReference>
<dbReference type="GeneID" id="100126360"/>
<dbReference type="Gramene" id="Zm00001eb114780_T001">
    <property type="protein sequence ID" value="Zm00001eb114780_P001"/>
    <property type="gene ID" value="Zm00001eb114780"/>
</dbReference>
<dbReference type="KEGG" id="zma:100126360"/>
<dbReference type="eggNOG" id="KOG1990">
    <property type="taxonomic scope" value="Eukaryota"/>
</dbReference>
<dbReference type="eggNOG" id="KOG2492">
    <property type="taxonomic scope" value="Eukaryota"/>
</dbReference>
<dbReference type="InParanoid" id="A7XN92"/>
<dbReference type="OMA" id="KVRFPWE"/>
<dbReference type="OrthoDB" id="551352at2759"/>
<dbReference type="Proteomes" id="UP000007305">
    <property type="component" value="Chromosome 2"/>
</dbReference>
<dbReference type="ExpressionAtlas" id="A7XN92">
    <property type="expression patterns" value="baseline and differential"/>
</dbReference>
<dbReference type="GO" id="GO:0009507">
    <property type="term" value="C:chloroplast"/>
    <property type="evidence" value="ECO:0000314"/>
    <property type="project" value="UniProtKB"/>
</dbReference>
<dbReference type="GO" id="GO:0009570">
    <property type="term" value="C:chloroplast stroma"/>
    <property type="evidence" value="ECO:0007669"/>
    <property type="project" value="UniProtKB-SubCell"/>
</dbReference>
<dbReference type="GO" id="GO:0005739">
    <property type="term" value="C:mitochondrion"/>
    <property type="evidence" value="ECO:0000314"/>
    <property type="project" value="UniProtKB"/>
</dbReference>
<dbReference type="GO" id="GO:1990904">
    <property type="term" value="C:ribonucleoprotein complex"/>
    <property type="evidence" value="ECO:0007669"/>
    <property type="project" value="UniProtKB-KW"/>
</dbReference>
<dbReference type="GO" id="GO:0003729">
    <property type="term" value="F:mRNA binding"/>
    <property type="evidence" value="ECO:0007669"/>
    <property type="project" value="InterPro"/>
</dbReference>
<dbReference type="GO" id="GO:0000373">
    <property type="term" value="P:Group II intron splicing"/>
    <property type="evidence" value="ECO:0000315"/>
    <property type="project" value="UniProtKB"/>
</dbReference>
<dbReference type="GO" id="GO:0006397">
    <property type="term" value="P:mRNA processing"/>
    <property type="evidence" value="ECO:0007669"/>
    <property type="project" value="UniProtKB-KW"/>
</dbReference>
<dbReference type="FunFam" id="3.30.110.60:FF:000003">
    <property type="entry name" value="CRM-domain containing factor CFM3B, chloroplastic"/>
    <property type="match status" value="1"/>
</dbReference>
<dbReference type="FunFam" id="3.30.110.60:FF:000002">
    <property type="entry name" value="CRS2-associated factor 1, chloroplastic"/>
    <property type="match status" value="2"/>
</dbReference>
<dbReference type="Gene3D" id="3.30.110.60">
    <property type="entry name" value="YhbY-like"/>
    <property type="match status" value="3"/>
</dbReference>
<dbReference type="InterPro" id="IPR045278">
    <property type="entry name" value="CRS1/CFM2/CFM3"/>
</dbReference>
<dbReference type="InterPro" id="IPR001890">
    <property type="entry name" value="RNA-binding_CRM"/>
</dbReference>
<dbReference type="InterPro" id="IPR035920">
    <property type="entry name" value="YhbY-like_sf"/>
</dbReference>
<dbReference type="PANTHER" id="PTHR31846:SF19">
    <property type="entry name" value="CRM-DOMAIN CONTAINING FACTOR CFM3A, CHLOROPLASTIC_MITOCHONDRIAL"/>
    <property type="match status" value="1"/>
</dbReference>
<dbReference type="PANTHER" id="PTHR31846">
    <property type="entry name" value="CRS1 / YHBY (CRM) DOMAIN-CONTAINING PROTEIN"/>
    <property type="match status" value="1"/>
</dbReference>
<dbReference type="Pfam" id="PF01985">
    <property type="entry name" value="CRS1_YhbY"/>
    <property type="match status" value="3"/>
</dbReference>
<dbReference type="SMART" id="SM01103">
    <property type="entry name" value="CRS1_YhbY"/>
    <property type="match status" value="3"/>
</dbReference>
<dbReference type="SUPFAM" id="SSF75471">
    <property type="entry name" value="YhbY-like"/>
    <property type="match status" value="3"/>
</dbReference>
<dbReference type="PROSITE" id="PS51295">
    <property type="entry name" value="CRM"/>
    <property type="match status" value="3"/>
</dbReference>
<proteinExistence type="evidence at protein level"/>
<gene>
    <name evidence="6" type="primary">CFM3</name>
</gene>
<accession>A7XN92</accession>